<reference key="1">
    <citation type="journal article" date="2006" name="Genome Biol.">
        <title>Genomic analysis reveals that Pseudomonas aeruginosa virulence is combinatorial.</title>
        <authorList>
            <person name="Lee D.G."/>
            <person name="Urbach J.M."/>
            <person name="Wu G."/>
            <person name="Liberati N.T."/>
            <person name="Feinbaum R.L."/>
            <person name="Miyata S."/>
            <person name="Diggins L.T."/>
            <person name="He J."/>
            <person name="Saucier M."/>
            <person name="Deziel E."/>
            <person name="Friedman L."/>
            <person name="Li L."/>
            <person name="Grills G."/>
            <person name="Montgomery K."/>
            <person name="Kucherlapati R."/>
            <person name="Rahme L.G."/>
            <person name="Ausubel F.M."/>
        </authorList>
    </citation>
    <scope>NUCLEOTIDE SEQUENCE [LARGE SCALE GENOMIC DNA]</scope>
    <source>
        <strain>UCBPP-PA14</strain>
    </source>
</reference>
<reference key="2">
    <citation type="journal article" date="2014" name="Anal. Bioanal. Chem.">
        <title>Potential of liquid-isoelectric-focusing protein fractionation to improve phosphoprotein characterization of Pseudomonas aeruginosa PA14.</title>
        <authorList>
            <person name="Ouidir T."/>
            <person name="Jarnier F."/>
            <person name="Cosette P."/>
            <person name="Jouenne T."/>
            <person name="Hardouin J."/>
        </authorList>
    </citation>
    <scope>IDENTIFICATION BY MASS SPECTROMETRY</scope>
    <source>
        <strain>UCBPP-PA14</strain>
    </source>
</reference>
<sequence length="88" mass="9775">MARVTVEDCLDNVDNRFELVMLATKRARQLATGGKEPKVAWENDKPTVVALREIASGLVDENVVQQEDIVEDEPLFAAFDDEANTEAL</sequence>
<feature type="chain" id="PRO_1000005979" description="DNA-directed RNA polymerase subunit omega">
    <location>
        <begin position="1"/>
        <end position="88"/>
    </location>
</feature>
<evidence type="ECO:0000255" key="1">
    <source>
        <dbReference type="HAMAP-Rule" id="MF_00366"/>
    </source>
</evidence>
<gene>
    <name evidence="1" type="primary">rpoZ</name>
    <name type="ordered locus">PA14_70450</name>
</gene>
<protein>
    <recommendedName>
        <fullName evidence="1">DNA-directed RNA polymerase subunit omega</fullName>
        <shortName evidence="1">RNAP omega subunit</shortName>
        <ecNumber evidence="1">2.7.7.6</ecNumber>
    </recommendedName>
    <alternativeName>
        <fullName evidence="1">RNA polymerase omega subunit</fullName>
    </alternativeName>
    <alternativeName>
        <fullName evidence="1">Transcriptase subunit omega</fullName>
    </alternativeName>
</protein>
<organism>
    <name type="scientific">Pseudomonas aeruginosa (strain UCBPP-PA14)</name>
    <dbReference type="NCBI Taxonomy" id="208963"/>
    <lineage>
        <taxon>Bacteria</taxon>
        <taxon>Pseudomonadati</taxon>
        <taxon>Pseudomonadota</taxon>
        <taxon>Gammaproteobacteria</taxon>
        <taxon>Pseudomonadales</taxon>
        <taxon>Pseudomonadaceae</taxon>
        <taxon>Pseudomonas</taxon>
    </lineage>
</organism>
<dbReference type="EC" id="2.7.7.6" evidence="1"/>
<dbReference type="EMBL" id="CP000438">
    <property type="protein sequence ID" value="ABJ14720.1"/>
    <property type="molecule type" value="Genomic_DNA"/>
</dbReference>
<dbReference type="RefSeq" id="WP_003096602.1">
    <property type="nucleotide sequence ID" value="NZ_CP034244.1"/>
</dbReference>
<dbReference type="SMR" id="Q02E25"/>
<dbReference type="GeneID" id="77223868"/>
<dbReference type="KEGG" id="pau:PA14_70450"/>
<dbReference type="PseudoCAP" id="PA14_70450"/>
<dbReference type="HOGENOM" id="CLU_125406_5_3_6"/>
<dbReference type="BioCyc" id="PAER208963:G1G74-5930-MONOMER"/>
<dbReference type="Proteomes" id="UP000000653">
    <property type="component" value="Chromosome"/>
</dbReference>
<dbReference type="GO" id="GO:0000428">
    <property type="term" value="C:DNA-directed RNA polymerase complex"/>
    <property type="evidence" value="ECO:0007669"/>
    <property type="project" value="UniProtKB-KW"/>
</dbReference>
<dbReference type="GO" id="GO:0003677">
    <property type="term" value="F:DNA binding"/>
    <property type="evidence" value="ECO:0007669"/>
    <property type="project" value="UniProtKB-UniRule"/>
</dbReference>
<dbReference type="GO" id="GO:0003899">
    <property type="term" value="F:DNA-directed RNA polymerase activity"/>
    <property type="evidence" value="ECO:0007669"/>
    <property type="project" value="UniProtKB-UniRule"/>
</dbReference>
<dbReference type="GO" id="GO:0006351">
    <property type="term" value="P:DNA-templated transcription"/>
    <property type="evidence" value="ECO:0007669"/>
    <property type="project" value="UniProtKB-UniRule"/>
</dbReference>
<dbReference type="Gene3D" id="3.90.940.10">
    <property type="match status" value="1"/>
</dbReference>
<dbReference type="HAMAP" id="MF_00366">
    <property type="entry name" value="RNApol_bact_RpoZ"/>
    <property type="match status" value="1"/>
</dbReference>
<dbReference type="InterPro" id="IPR003716">
    <property type="entry name" value="DNA-dir_RNA_pol_omega"/>
</dbReference>
<dbReference type="InterPro" id="IPR006110">
    <property type="entry name" value="Pol_omega/Rpo6/RPB6"/>
</dbReference>
<dbReference type="InterPro" id="IPR036161">
    <property type="entry name" value="RPB6/omega-like_sf"/>
</dbReference>
<dbReference type="NCBIfam" id="TIGR00690">
    <property type="entry name" value="rpoZ"/>
    <property type="match status" value="1"/>
</dbReference>
<dbReference type="PANTHER" id="PTHR34476">
    <property type="entry name" value="DNA-DIRECTED RNA POLYMERASE SUBUNIT OMEGA"/>
    <property type="match status" value="1"/>
</dbReference>
<dbReference type="PANTHER" id="PTHR34476:SF1">
    <property type="entry name" value="DNA-DIRECTED RNA POLYMERASE SUBUNIT OMEGA"/>
    <property type="match status" value="1"/>
</dbReference>
<dbReference type="Pfam" id="PF01192">
    <property type="entry name" value="RNA_pol_Rpb6"/>
    <property type="match status" value="1"/>
</dbReference>
<dbReference type="SMART" id="SM01409">
    <property type="entry name" value="RNA_pol_Rpb6"/>
    <property type="match status" value="1"/>
</dbReference>
<dbReference type="SUPFAM" id="SSF63562">
    <property type="entry name" value="RPB6/omega subunit-like"/>
    <property type="match status" value="1"/>
</dbReference>
<proteinExistence type="evidence at protein level"/>
<name>RPOZ_PSEAB</name>
<accession>Q02E25</accession>
<comment type="function">
    <text evidence="1">Promotes RNA polymerase assembly. Latches the N- and C-terminal regions of the beta' subunit thereby facilitating its interaction with the beta and alpha subunits.</text>
</comment>
<comment type="catalytic activity">
    <reaction evidence="1">
        <text>RNA(n) + a ribonucleoside 5'-triphosphate = RNA(n+1) + diphosphate</text>
        <dbReference type="Rhea" id="RHEA:21248"/>
        <dbReference type="Rhea" id="RHEA-COMP:14527"/>
        <dbReference type="Rhea" id="RHEA-COMP:17342"/>
        <dbReference type="ChEBI" id="CHEBI:33019"/>
        <dbReference type="ChEBI" id="CHEBI:61557"/>
        <dbReference type="ChEBI" id="CHEBI:140395"/>
        <dbReference type="EC" id="2.7.7.6"/>
    </reaction>
</comment>
<comment type="subunit">
    <text evidence="1">The RNAP catalytic core consists of 2 alpha, 1 beta, 1 beta' and 1 omega subunit. When a sigma factor is associated with the core the holoenzyme is formed, which can initiate transcription.</text>
</comment>
<comment type="similarity">
    <text evidence="1">Belongs to the RNA polymerase subunit omega family.</text>
</comment>
<keyword id="KW-0240">DNA-directed RNA polymerase</keyword>
<keyword id="KW-0548">Nucleotidyltransferase</keyword>
<keyword id="KW-0804">Transcription</keyword>
<keyword id="KW-0808">Transferase</keyword>